<name>RISB_PELPB</name>
<evidence type="ECO:0000255" key="1">
    <source>
        <dbReference type="HAMAP-Rule" id="MF_00178"/>
    </source>
</evidence>
<comment type="function">
    <text evidence="1">Catalyzes the formation of 6,7-dimethyl-8-ribityllumazine by condensation of 5-amino-6-(D-ribitylamino)uracil with 3,4-dihydroxy-2-butanone 4-phosphate. This is the penultimate step in the biosynthesis of riboflavin.</text>
</comment>
<comment type="catalytic activity">
    <reaction evidence="1">
        <text>(2S)-2-hydroxy-3-oxobutyl phosphate + 5-amino-6-(D-ribitylamino)uracil = 6,7-dimethyl-8-(1-D-ribityl)lumazine + phosphate + 2 H2O + H(+)</text>
        <dbReference type="Rhea" id="RHEA:26152"/>
        <dbReference type="ChEBI" id="CHEBI:15377"/>
        <dbReference type="ChEBI" id="CHEBI:15378"/>
        <dbReference type="ChEBI" id="CHEBI:15934"/>
        <dbReference type="ChEBI" id="CHEBI:43474"/>
        <dbReference type="ChEBI" id="CHEBI:58201"/>
        <dbReference type="ChEBI" id="CHEBI:58830"/>
        <dbReference type="EC" id="2.5.1.78"/>
    </reaction>
</comment>
<comment type="pathway">
    <text evidence="1">Cofactor biosynthesis; riboflavin biosynthesis; riboflavin from 2-hydroxy-3-oxobutyl phosphate and 5-amino-6-(D-ribitylamino)uracil: step 1/2.</text>
</comment>
<comment type="similarity">
    <text evidence="1">Belongs to the DMRL synthase family.</text>
</comment>
<dbReference type="EC" id="2.5.1.78" evidence="1"/>
<dbReference type="EMBL" id="CP001110">
    <property type="protein sequence ID" value="ACF44867.1"/>
    <property type="molecule type" value="Genomic_DNA"/>
</dbReference>
<dbReference type="RefSeq" id="WP_012509339.1">
    <property type="nucleotide sequence ID" value="NC_011060.1"/>
</dbReference>
<dbReference type="SMR" id="B4SGD1"/>
<dbReference type="STRING" id="324925.Ppha_2709"/>
<dbReference type="KEGG" id="pph:Ppha_2709"/>
<dbReference type="eggNOG" id="COG0054">
    <property type="taxonomic scope" value="Bacteria"/>
</dbReference>
<dbReference type="HOGENOM" id="CLU_089358_1_1_10"/>
<dbReference type="OrthoDB" id="9809709at2"/>
<dbReference type="UniPathway" id="UPA00275">
    <property type="reaction ID" value="UER00404"/>
</dbReference>
<dbReference type="Proteomes" id="UP000002724">
    <property type="component" value="Chromosome"/>
</dbReference>
<dbReference type="GO" id="GO:0005829">
    <property type="term" value="C:cytosol"/>
    <property type="evidence" value="ECO:0007669"/>
    <property type="project" value="TreeGrafter"/>
</dbReference>
<dbReference type="GO" id="GO:0009349">
    <property type="term" value="C:riboflavin synthase complex"/>
    <property type="evidence" value="ECO:0007669"/>
    <property type="project" value="InterPro"/>
</dbReference>
<dbReference type="GO" id="GO:0000906">
    <property type="term" value="F:6,7-dimethyl-8-ribityllumazine synthase activity"/>
    <property type="evidence" value="ECO:0007669"/>
    <property type="project" value="UniProtKB-UniRule"/>
</dbReference>
<dbReference type="GO" id="GO:0009231">
    <property type="term" value="P:riboflavin biosynthetic process"/>
    <property type="evidence" value="ECO:0007669"/>
    <property type="project" value="UniProtKB-UniRule"/>
</dbReference>
<dbReference type="CDD" id="cd09209">
    <property type="entry name" value="Lumazine_synthase-I"/>
    <property type="match status" value="1"/>
</dbReference>
<dbReference type="FunFam" id="3.40.50.960:FF:000001">
    <property type="entry name" value="6,7-dimethyl-8-ribityllumazine synthase"/>
    <property type="match status" value="1"/>
</dbReference>
<dbReference type="Gene3D" id="3.40.50.960">
    <property type="entry name" value="Lumazine/riboflavin synthase"/>
    <property type="match status" value="1"/>
</dbReference>
<dbReference type="HAMAP" id="MF_00178">
    <property type="entry name" value="Lumazine_synth"/>
    <property type="match status" value="1"/>
</dbReference>
<dbReference type="InterPro" id="IPR034964">
    <property type="entry name" value="LS"/>
</dbReference>
<dbReference type="InterPro" id="IPR002180">
    <property type="entry name" value="LS/RS"/>
</dbReference>
<dbReference type="InterPro" id="IPR036467">
    <property type="entry name" value="LS/RS_sf"/>
</dbReference>
<dbReference type="NCBIfam" id="TIGR00114">
    <property type="entry name" value="lumazine-synth"/>
    <property type="match status" value="1"/>
</dbReference>
<dbReference type="NCBIfam" id="NF000812">
    <property type="entry name" value="PRK00061.1-4"/>
    <property type="match status" value="1"/>
</dbReference>
<dbReference type="PANTHER" id="PTHR21058:SF0">
    <property type="entry name" value="6,7-DIMETHYL-8-RIBITYLLUMAZINE SYNTHASE"/>
    <property type="match status" value="1"/>
</dbReference>
<dbReference type="PANTHER" id="PTHR21058">
    <property type="entry name" value="6,7-DIMETHYL-8-RIBITYLLUMAZINE SYNTHASE DMRL SYNTHASE LUMAZINE SYNTHASE"/>
    <property type="match status" value="1"/>
</dbReference>
<dbReference type="Pfam" id="PF00885">
    <property type="entry name" value="DMRL_synthase"/>
    <property type="match status" value="1"/>
</dbReference>
<dbReference type="SUPFAM" id="SSF52121">
    <property type="entry name" value="Lumazine synthase"/>
    <property type="match status" value="1"/>
</dbReference>
<accession>B4SGD1</accession>
<gene>
    <name evidence="1" type="primary">ribH</name>
    <name type="ordered locus">Ppha_2709</name>
</gene>
<proteinExistence type="inferred from homology"/>
<protein>
    <recommendedName>
        <fullName evidence="1">6,7-dimethyl-8-ribityllumazine synthase</fullName>
        <shortName evidence="1">DMRL synthase</shortName>
        <shortName evidence="1">LS</shortName>
        <shortName evidence="1">Lumazine synthase</shortName>
        <ecNumber evidence="1">2.5.1.78</ecNumber>
    </recommendedName>
</protein>
<sequence>MQVKQIEGVLNAKDIRFALVVGRFNDFIGQKLVEGAIDCICRHGGSEECIAMYRCPGAFELPMVAKKVALSGKYDAIITLGVIIRGSTPHFDVLAAEATKGIAQVALDTMVPIAFGVLTTENIEQAIERAGTKAGNKGFDAAMTAIEMVNLYRQI</sequence>
<reference key="1">
    <citation type="submission" date="2008-06" db="EMBL/GenBank/DDBJ databases">
        <title>Complete sequence of Pelodictyon phaeoclathratiforme BU-1.</title>
        <authorList>
            <consortium name="US DOE Joint Genome Institute"/>
            <person name="Lucas S."/>
            <person name="Copeland A."/>
            <person name="Lapidus A."/>
            <person name="Glavina del Rio T."/>
            <person name="Dalin E."/>
            <person name="Tice H."/>
            <person name="Bruce D."/>
            <person name="Goodwin L."/>
            <person name="Pitluck S."/>
            <person name="Schmutz J."/>
            <person name="Larimer F."/>
            <person name="Land M."/>
            <person name="Hauser L."/>
            <person name="Kyrpides N."/>
            <person name="Mikhailova N."/>
            <person name="Liu Z."/>
            <person name="Li T."/>
            <person name="Zhao F."/>
            <person name="Overmann J."/>
            <person name="Bryant D.A."/>
            <person name="Richardson P."/>
        </authorList>
    </citation>
    <scope>NUCLEOTIDE SEQUENCE [LARGE SCALE GENOMIC DNA]</scope>
    <source>
        <strain>DSM 5477 / BU-1</strain>
    </source>
</reference>
<keyword id="KW-1185">Reference proteome</keyword>
<keyword id="KW-0686">Riboflavin biosynthesis</keyword>
<keyword id="KW-0808">Transferase</keyword>
<organism>
    <name type="scientific">Pelodictyon phaeoclathratiforme (strain DSM 5477 / BU-1)</name>
    <dbReference type="NCBI Taxonomy" id="324925"/>
    <lineage>
        <taxon>Bacteria</taxon>
        <taxon>Pseudomonadati</taxon>
        <taxon>Chlorobiota</taxon>
        <taxon>Chlorobiia</taxon>
        <taxon>Chlorobiales</taxon>
        <taxon>Chlorobiaceae</taxon>
        <taxon>Chlorobium/Pelodictyon group</taxon>
        <taxon>Pelodictyon</taxon>
    </lineage>
</organism>
<feature type="chain" id="PRO_1000098213" description="6,7-dimethyl-8-ribityllumazine synthase">
    <location>
        <begin position="1"/>
        <end position="155"/>
    </location>
</feature>
<feature type="active site" description="Proton donor" evidence="1">
    <location>
        <position position="90"/>
    </location>
</feature>
<feature type="binding site" evidence="1">
    <location>
        <position position="24"/>
    </location>
    <ligand>
        <name>5-amino-6-(D-ribitylamino)uracil</name>
        <dbReference type="ChEBI" id="CHEBI:15934"/>
    </ligand>
</feature>
<feature type="binding site" evidence="1">
    <location>
        <begin position="58"/>
        <end position="60"/>
    </location>
    <ligand>
        <name>5-amino-6-(D-ribitylamino)uracil</name>
        <dbReference type="ChEBI" id="CHEBI:15934"/>
    </ligand>
</feature>
<feature type="binding site" evidence="1">
    <location>
        <begin position="82"/>
        <end position="84"/>
    </location>
    <ligand>
        <name>5-amino-6-(D-ribitylamino)uracil</name>
        <dbReference type="ChEBI" id="CHEBI:15934"/>
    </ligand>
</feature>
<feature type="binding site" evidence="1">
    <location>
        <begin position="87"/>
        <end position="88"/>
    </location>
    <ligand>
        <name>(2S)-2-hydroxy-3-oxobutyl phosphate</name>
        <dbReference type="ChEBI" id="CHEBI:58830"/>
    </ligand>
</feature>
<feature type="binding site" evidence="1">
    <location>
        <position position="115"/>
    </location>
    <ligand>
        <name>5-amino-6-(D-ribitylamino)uracil</name>
        <dbReference type="ChEBI" id="CHEBI:15934"/>
    </ligand>
</feature>
<feature type="binding site" evidence="1">
    <location>
        <position position="129"/>
    </location>
    <ligand>
        <name>(2S)-2-hydroxy-3-oxobutyl phosphate</name>
        <dbReference type="ChEBI" id="CHEBI:58830"/>
    </ligand>
</feature>